<proteinExistence type="inferred from homology"/>
<name>RSSA_KOMPG</name>
<accession>C4QYK0</accession>
<gene>
    <name evidence="1" type="primary">RPS0</name>
    <name type="ordered locus">PAS_chr1-4_0471</name>
</gene>
<reference key="1">
    <citation type="journal article" date="2009" name="Nat. Biotechnol.">
        <title>Genome sequence of the recombinant protein production host Pichia pastoris.</title>
        <authorList>
            <person name="De Schutter K."/>
            <person name="Lin Y.-C."/>
            <person name="Tiels P."/>
            <person name="Van Hecke A."/>
            <person name="Glinka S."/>
            <person name="Weber-Lehmann J."/>
            <person name="Rouze P."/>
            <person name="Van de Peer Y."/>
            <person name="Callewaert N."/>
        </authorList>
    </citation>
    <scope>NUCLEOTIDE SEQUENCE [LARGE SCALE GENOMIC DNA]</scope>
    <source>
        <strain>GS115 / ATCC 20864</strain>
    </source>
</reference>
<feature type="initiator methionine" description="Removed" evidence="1">
    <location>
        <position position="1"/>
    </location>
</feature>
<feature type="chain" id="PRO_0000389286" description="Small ribosomal subunit protein uS2">
    <location>
        <begin position="2"/>
        <end position="263"/>
    </location>
</feature>
<feature type="region of interest" description="Disordered" evidence="2">
    <location>
        <begin position="211"/>
        <end position="263"/>
    </location>
</feature>
<feature type="compositionally biased region" description="Acidic residues" evidence="2">
    <location>
        <begin position="211"/>
        <end position="242"/>
    </location>
</feature>
<feature type="compositionally biased region" description="Low complexity" evidence="2">
    <location>
        <begin position="246"/>
        <end position="263"/>
    </location>
</feature>
<feature type="modified residue" description="N-acetylserine" evidence="1">
    <location>
        <position position="2"/>
    </location>
</feature>
<evidence type="ECO:0000255" key="1">
    <source>
        <dbReference type="HAMAP-Rule" id="MF_03015"/>
    </source>
</evidence>
<evidence type="ECO:0000256" key="2">
    <source>
        <dbReference type="SAM" id="MobiDB-lite"/>
    </source>
</evidence>
<evidence type="ECO:0000305" key="3"/>
<keyword id="KW-0007">Acetylation</keyword>
<keyword id="KW-0963">Cytoplasm</keyword>
<keyword id="KW-1185">Reference proteome</keyword>
<keyword id="KW-0687">Ribonucleoprotein</keyword>
<keyword id="KW-0689">Ribosomal protein</keyword>
<comment type="function">
    <text evidence="1">Required for the assembly and/or stability of the 40S ribosomal subunit. Required for the processing of the 20S rRNA-precursor to mature 18S rRNA in a late step of the maturation of 40S ribosomal subunits.</text>
</comment>
<comment type="subunit">
    <text evidence="1">Component of the small ribosomal subunit. Mature ribosomes consist of a small (40S) and a large (60S) subunit. The 40S subunit contains about 33 different proteins and 1 molecule of RNA (18S). The 60S subunit contains about 49 different proteins and 3 molecules of RNA (25S, 5.8S and 5S). Interacts with RPS21.</text>
</comment>
<comment type="subcellular location">
    <subcellularLocation>
        <location evidence="1">Cytoplasm</location>
    </subcellularLocation>
</comment>
<comment type="similarity">
    <text evidence="1">Belongs to the universal ribosomal protein uS2 family.</text>
</comment>
<sequence length="263" mass="29222">MSLPASFDLTAEDAKLLLAANVHLGAKNCQVHNEPYVYKTRPDGVNVINIGKTWEKIVLAARIIAAIPNPEDVVAVSSRTFGQRAVLKFASHTNGSAIAGRFTPGSFTNYITREFKEPRLIIVTDPRTDSQAIKESSYVNIPIIALTDMDSPSEFVDVAIPCNNKGKHSIGLIWYLLSREVLRLRGVLPNRTEAWSVMPDLYFYRDPEEIEQTAEEEAEAAEGAEFEVEEEEVEQEWQEPAEADWNASAPPADWNDAANAEAF</sequence>
<dbReference type="EMBL" id="FN392319">
    <property type="protein sequence ID" value="CAY68323.1"/>
    <property type="molecule type" value="Genomic_DNA"/>
</dbReference>
<dbReference type="RefSeq" id="XP_002490604.1">
    <property type="nucleotide sequence ID" value="XM_002490559.1"/>
</dbReference>
<dbReference type="SMR" id="C4QYK0"/>
<dbReference type="FunCoup" id="C4QYK0">
    <property type="interactions" value="1359"/>
</dbReference>
<dbReference type="STRING" id="644223.C4QYK0"/>
<dbReference type="EnsemblFungi" id="CAY68323">
    <property type="protein sequence ID" value="CAY68323"/>
    <property type="gene ID" value="PAS_chr1-4_0471"/>
</dbReference>
<dbReference type="GeneID" id="8197059"/>
<dbReference type="KEGG" id="ppa:PAS_chr1-4_0471"/>
<dbReference type="eggNOG" id="KOG0830">
    <property type="taxonomic scope" value="Eukaryota"/>
</dbReference>
<dbReference type="HOGENOM" id="CLU_058171_2_0_1"/>
<dbReference type="InParanoid" id="C4QYK0"/>
<dbReference type="OMA" id="QMERYIC"/>
<dbReference type="OrthoDB" id="414863at2759"/>
<dbReference type="Proteomes" id="UP000000314">
    <property type="component" value="Chromosome 1"/>
</dbReference>
<dbReference type="GO" id="GO:0022627">
    <property type="term" value="C:cytosolic small ribosomal subunit"/>
    <property type="evidence" value="ECO:0007669"/>
    <property type="project" value="UniProtKB-UniRule"/>
</dbReference>
<dbReference type="GO" id="GO:0003735">
    <property type="term" value="F:structural constituent of ribosome"/>
    <property type="evidence" value="ECO:0007669"/>
    <property type="project" value="UniProtKB-UniRule"/>
</dbReference>
<dbReference type="GO" id="GO:0000028">
    <property type="term" value="P:ribosomal small subunit assembly"/>
    <property type="evidence" value="ECO:0007669"/>
    <property type="project" value="UniProtKB-UniRule"/>
</dbReference>
<dbReference type="GO" id="GO:0006412">
    <property type="term" value="P:translation"/>
    <property type="evidence" value="ECO:0007669"/>
    <property type="project" value="UniProtKB-UniRule"/>
</dbReference>
<dbReference type="CDD" id="cd01425">
    <property type="entry name" value="RPS2"/>
    <property type="match status" value="1"/>
</dbReference>
<dbReference type="FunFam" id="3.40.50.10490:FF:000010">
    <property type="entry name" value="40S ribosomal protein S0"/>
    <property type="match status" value="1"/>
</dbReference>
<dbReference type="Gene3D" id="3.40.50.10490">
    <property type="entry name" value="Glucose-6-phosphate isomerase like protein, domain 1"/>
    <property type="match status" value="1"/>
</dbReference>
<dbReference type="HAMAP" id="MF_03015">
    <property type="entry name" value="Ribosomal_S2_euk"/>
    <property type="match status" value="1"/>
</dbReference>
<dbReference type="InterPro" id="IPR001865">
    <property type="entry name" value="Ribosomal_uS2"/>
</dbReference>
<dbReference type="InterPro" id="IPR018130">
    <property type="entry name" value="Ribosomal_uS2_CS"/>
</dbReference>
<dbReference type="InterPro" id="IPR027498">
    <property type="entry name" value="Ribosomal_uS2_euk"/>
</dbReference>
<dbReference type="InterPro" id="IPR005707">
    <property type="entry name" value="Ribosomal_uS2_euk/arc"/>
</dbReference>
<dbReference type="InterPro" id="IPR023591">
    <property type="entry name" value="Ribosomal_uS2_flav_dom_sf"/>
</dbReference>
<dbReference type="NCBIfam" id="TIGR01012">
    <property type="entry name" value="uS2_euk_arch"/>
    <property type="match status" value="1"/>
</dbReference>
<dbReference type="PANTHER" id="PTHR11489">
    <property type="entry name" value="40S RIBOSOMAL PROTEIN SA"/>
    <property type="match status" value="1"/>
</dbReference>
<dbReference type="Pfam" id="PF00318">
    <property type="entry name" value="Ribosomal_S2"/>
    <property type="match status" value="2"/>
</dbReference>
<dbReference type="PRINTS" id="PR00395">
    <property type="entry name" value="RIBOSOMALS2"/>
</dbReference>
<dbReference type="SUPFAM" id="SSF52313">
    <property type="entry name" value="Ribosomal protein S2"/>
    <property type="match status" value="1"/>
</dbReference>
<dbReference type="PROSITE" id="PS00962">
    <property type="entry name" value="RIBOSOMAL_S2_1"/>
    <property type="match status" value="1"/>
</dbReference>
<dbReference type="PROSITE" id="PS00963">
    <property type="entry name" value="RIBOSOMAL_S2_2"/>
    <property type="match status" value="1"/>
</dbReference>
<protein>
    <recommendedName>
        <fullName evidence="1">Small ribosomal subunit protein uS2</fullName>
    </recommendedName>
    <alternativeName>
        <fullName evidence="3">40S ribosomal protein S0</fullName>
    </alternativeName>
</protein>
<organism>
    <name type="scientific">Komagataella phaffii (strain GS115 / ATCC 20864)</name>
    <name type="common">Yeast</name>
    <name type="synonym">Pichia pastoris</name>
    <dbReference type="NCBI Taxonomy" id="644223"/>
    <lineage>
        <taxon>Eukaryota</taxon>
        <taxon>Fungi</taxon>
        <taxon>Dikarya</taxon>
        <taxon>Ascomycota</taxon>
        <taxon>Saccharomycotina</taxon>
        <taxon>Pichiomycetes</taxon>
        <taxon>Pichiales</taxon>
        <taxon>Pichiaceae</taxon>
        <taxon>Komagataella</taxon>
    </lineage>
</organism>